<feature type="signal peptide" evidence="1">
    <location>
        <begin position="1"/>
        <end position="22"/>
    </location>
</feature>
<feature type="propeptide" id="PRO_0000449904" evidence="6">
    <location>
        <begin position="23"/>
        <end position="49"/>
    </location>
</feature>
<feature type="peptide" id="PRO_5004295650" description="Caerin 1.11" evidence="6">
    <location>
        <begin position="50"/>
        <end position="74"/>
    </location>
</feature>
<feature type="region of interest" description="Disordered" evidence="2">
    <location>
        <begin position="24"/>
        <end position="48"/>
    </location>
</feature>
<feature type="compositionally biased region" description="Acidic residues" evidence="2">
    <location>
        <begin position="30"/>
        <end position="45"/>
    </location>
</feature>
<feature type="modified residue" description="Leucine amide" evidence="6">
    <location>
        <position position="74"/>
    </location>
</feature>
<reference key="1">
    <citation type="journal article" date="2003" name="Eur. J. Biochem.">
        <title>Antimicrobial peptides from hylid and ranin frogs originated from a 150-million-year-old ancestral precursor with a conserved signal peptide but a hypermutable antimicrobial domain.</title>
        <authorList>
            <person name="Vanhoye D."/>
            <person name="Bruston F."/>
            <person name="Nicolas P."/>
            <person name="Amiche M."/>
        </authorList>
    </citation>
    <scope>NUCLEOTIDE SEQUENCE [MRNA]</scope>
    <scope>FUNCTION</scope>
    <scope>SYNTHESIS OF 50-74</scope>
    <scope>AMIDATION AT LEU-74</scope>
    <source>
        <tissue>Skin</tissue>
    </source>
</reference>
<name>CR1B_RANCA</name>
<keyword id="KW-0027">Amidation</keyword>
<keyword id="KW-0878">Amphibian defense peptide</keyword>
<keyword id="KW-0044">Antibiotic</keyword>
<keyword id="KW-0929">Antimicrobial</keyword>
<keyword id="KW-0165">Cleavage on pair of basic residues</keyword>
<keyword id="KW-0391">Immunity</keyword>
<keyword id="KW-0399">Innate immunity</keyword>
<keyword id="KW-0472">Membrane</keyword>
<keyword id="KW-0964">Secreted</keyword>
<keyword id="KW-0732">Signal</keyword>
<keyword id="KW-1052">Target cell membrane</keyword>
<keyword id="KW-1053">Target membrane</keyword>
<organism>
    <name type="scientific">Ranoidea caerulea</name>
    <name type="common">Green tree frog</name>
    <name type="synonym">Litoria caerulea</name>
    <dbReference type="NCBI Taxonomy" id="30344"/>
    <lineage>
        <taxon>Eukaryota</taxon>
        <taxon>Metazoa</taxon>
        <taxon>Chordata</taxon>
        <taxon>Craniata</taxon>
        <taxon>Vertebrata</taxon>
        <taxon>Euteleostomi</taxon>
        <taxon>Amphibia</taxon>
        <taxon>Batrachia</taxon>
        <taxon>Anura</taxon>
        <taxon>Neobatrachia</taxon>
        <taxon>Hyloidea</taxon>
        <taxon>Hylidae</taxon>
        <taxon>Pelodryadinae</taxon>
        <taxon>Ranoidea</taxon>
    </lineage>
</organism>
<sequence length="75" mass="8381">MASLKKSLFLVLFLGFVSVSICEEEKRQEDEDEHEEEGENQEEGSEEKRGLFSVLGSVAKHVVPRVVPVIAEHLG</sequence>
<protein>
    <recommendedName>
        <fullName evidence="4">Caerin 1.11</fullName>
    </recommendedName>
</protein>
<proteinExistence type="evidence at protein level"/>
<dbReference type="EMBL" id="AY218778">
    <property type="protein sequence ID" value="AAO62953.1"/>
    <property type="molecule type" value="mRNA"/>
</dbReference>
<dbReference type="GO" id="GO:0005576">
    <property type="term" value="C:extracellular region"/>
    <property type="evidence" value="ECO:0007669"/>
    <property type="project" value="UniProtKB-SubCell"/>
</dbReference>
<dbReference type="GO" id="GO:0016020">
    <property type="term" value="C:membrane"/>
    <property type="evidence" value="ECO:0007669"/>
    <property type="project" value="UniProtKB-KW"/>
</dbReference>
<dbReference type="GO" id="GO:0044218">
    <property type="term" value="C:other organism cell membrane"/>
    <property type="evidence" value="ECO:0007669"/>
    <property type="project" value="UniProtKB-KW"/>
</dbReference>
<dbReference type="GO" id="GO:0042742">
    <property type="term" value="P:defense response to bacterium"/>
    <property type="evidence" value="ECO:0007669"/>
    <property type="project" value="UniProtKB-KW"/>
</dbReference>
<dbReference type="GO" id="GO:0045087">
    <property type="term" value="P:innate immune response"/>
    <property type="evidence" value="ECO:0007669"/>
    <property type="project" value="UniProtKB-KW"/>
</dbReference>
<dbReference type="InterPro" id="IPR010000">
    <property type="entry name" value="Caerin_1"/>
</dbReference>
<dbReference type="InterPro" id="IPR004275">
    <property type="entry name" value="Frog_antimicrobial_propeptide"/>
</dbReference>
<dbReference type="InterPro" id="IPR016322">
    <property type="entry name" value="FSAP"/>
</dbReference>
<dbReference type="Pfam" id="PF07440">
    <property type="entry name" value="Caerin_1"/>
    <property type="match status" value="1"/>
</dbReference>
<dbReference type="Pfam" id="PF03032">
    <property type="entry name" value="FSAP_sig_propep"/>
    <property type="match status" value="1"/>
</dbReference>
<dbReference type="PIRSF" id="PIRSF001822">
    <property type="entry name" value="Dermaseptin_precursor"/>
    <property type="match status" value="1"/>
</dbReference>
<comment type="function">
    <text evidence="3">Cationic amphipathic alpha-helical antimicrobial peptide with weak or no activity against both Gram-positive and Gram-negative bacteria (PubMed:12709067). Is weakly active against E.coli (MIC=25 uM), E.cloacae (MIC=50 uM), K.pneumoniae (MIC=25 uM), and S.haemolyticus (MIC=50 uM) (PubMed:12709067). Has no activity against S.typhimurium, S.enteritidis, B.megaterium, and S.aureus (MIC&gt;100 uM) (PubMed:12709067).</text>
</comment>
<comment type="subcellular location">
    <subcellularLocation>
        <location evidence="6">Secreted</location>
    </subcellularLocation>
    <subcellularLocation>
        <location evidence="6">Target cell membrane</location>
    </subcellularLocation>
</comment>
<comment type="tissue specificity">
    <text evidence="6">Expressed by the skin glands.</text>
</comment>
<comment type="similarity">
    <text evidence="5">Belongs to the frog skin active peptide (FSAP) family. Caerin subfamily.</text>
</comment>
<evidence type="ECO:0000255" key="1"/>
<evidence type="ECO:0000256" key="2">
    <source>
        <dbReference type="SAM" id="MobiDB-lite"/>
    </source>
</evidence>
<evidence type="ECO:0000269" key="3">
    <source>
    </source>
</evidence>
<evidence type="ECO:0000303" key="4">
    <source>
    </source>
</evidence>
<evidence type="ECO:0000305" key="5"/>
<evidence type="ECO:0000305" key="6">
    <source>
    </source>
</evidence>
<accession>Q800R9</accession>